<name>PANB_PORG3</name>
<proteinExistence type="inferred from homology"/>
<gene>
    <name evidence="1" type="primary">panB</name>
    <name type="ordered locus">PGN_0634</name>
</gene>
<evidence type="ECO:0000255" key="1">
    <source>
        <dbReference type="HAMAP-Rule" id="MF_00156"/>
    </source>
</evidence>
<sequence>MSTYQPEDTRKVTTHRLIEMKSRGEKISMLTAYDYSMAKLVDEAGMDVILVGDSASNVMAGNVTTLPITLDQMIYHGKSVVKAVKRALVVVDLPFGSYQGNSKEALCSAIRVMKETHADCIKLEGGEEVRESIVRILSAGIPIMGHLGLMPQSINKFGTYNVRAKEEAEAEKLLQDAHLLEELGCFALVLEKIPAELATRVASELSIPVIGIGAGGGVDGQVLVMHDMLGITEGFSPRFLRRYANLANEIDRALKHYIADVKSMDFPNKDEQY</sequence>
<organism>
    <name type="scientific">Porphyromonas gingivalis (strain ATCC 33277 / DSM 20709 / CIP 103683 / JCM 12257 / NCTC 11834 / 2561)</name>
    <dbReference type="NCBI Taxonomy" id="431947"/>
    <lineage>
        <taxon>Bacteria</taxon>
        <taxon>Pseudomonadati</taxon>
        <taxon>Bacteroidota</taxon>
        <taxon>Bacteroidia</taxon>
        <taxon>Bacteroidales</taxon>
        <taxon>Porphyromonadaceae</taxon>
        <taxon>Porphyromonas</taxon>
    </lineage>
</organism>
<dbReference type="EC" id="2.1.2.11" evidence="1"/>
<dbReference type="EMBL" id="AP009380">
    <property type="protein sequence ID" value="BAG33153.1"/>
    <property type="molecule type" value="Genomic_DNA"/>
</dbReference>
<dbReference type="RefSeq" id="WP_004585127.1">
    <property type="nucleotide sequence ID" value="NZ_CP025930.1"/>
</dbReference>
<dbReference type="SMR" id="B2RIF8"/>
<dbReference type="GeneID" id="29255860"/>
<dbReference type="KEGG" id="pgn:PGN_0634"/>
<dbReference type="eggNOG" id="COG0413">
    <property type="taxonomic scope" value="Bacteria"/>
</dbReference>
<dbReference type="HOGENOM" id="CLU_036645_1_0_10"/>
<dbReference type="OrthoDB" id="9781789at2"/>
<dbReference type="BioCyc" id="PGIN431947:G1G2V-697-MONOMER"/>
<dbReference type="UniPathway" id="UPA00028">
    <property type="reaction ID" value="UER00003"/>
</dbReference>
<dbReference type="Proteomes" id="UP000008842">
    <property type="component" value="Chromosome"/>
</dbReference>
<dbReference type="GO" id="GO:0005737">
    <property type="term" value="C:cytoplasm"/>
    <property type="evidence" value="ECO:0007669"/>
    <property type="project" value="UniProtKB-SubCell"/>
</dbReference>
<dbReference type="GO" id="GO:0003864">
    <property type="term" value="F:3-methyl-2-oxobutanoate hydroxymethyltransferase activity"/>
    <property type="evidence" value="ECO:0007669"/>
    <property type="project" value="UniProtKB-UniRule"/>
</dbReference>
<dbReference type="GO" id="GO:0000287">
    <property type="term" value="F:magnesium ion binding"/>
    <property type="evidence" value="ECO:0007669"/>
    <property type="project" value="TreeGrafter"/>
</dbReference>
<dbReference type="GO" id="GO:0015940">
    <property type="term" value="P:pantothenate biosynthetic process"/>
    <property type="evidence" value="ECO:0007669"/>
    <property type="project" value="UniProtKB-UniRule"/>
</dbReference>
<dbReference type="CDD" id="cd06557">
    <property type="entry name" value="KPHMT-like"/>
    <property type="match status" value="1"/>
</dbReference>
<dbReference type="FunFam" id="3.20.20.60:FF:000017">
    <property type="entry name" value="3-methyl-2-oxobutanoate hydroxymethyltransferase"/>
    <property type="match status" value="1"/>
</dbReference>
<dbReference type="Gene3D" id="3.20.20.60">
    <property type="entry name" value="Phosphoenolpyruvate-binding domains"/>
    <property type="match status" value="1"/>
</dbReference>
<dbReference type="HAMAP" id="MF_00156">
    <property type="entry name" value="PanB"/>
    <property type="match status" value="1"/>
</dbReference>
<dbReference type="InterPro" id="IPR003700">
    <property type="entry name" value="Pantoate_hydroxy_MeTrfase"/>
</dbReference>
<dbReference type="InterPro" id="IPR015813">
    <property type="entry name" value="Pyrv/PenolPyrv_kinase-like_dom"/>
</dbReference>
<dbReference type="InterPro" id="IPR040442">
    <property type="entry name" value="Pyrv_kinase-like_dom_sf"/>
</dbReference>
<dbReference type="NCBIfam" id="TIGR00222">
    <property type="entry name" value="panB"/>
    <property type="match status" value="1"/>
</dbReference>
<dbReference type="NCBIfam" id="NF001452">
    <property type="entry name" value="PRK00311.1"/>
    <property type="match status" value="1"/>
</dbReference>
<dbReference type="PANTHER" id="PTHR20881">
    <property type="entry name" value="3-METHYL-2-OXOBUTANOATE HYDROXYMETHYLTRANSFERASE"/>
    <property type="match status" value="1"/>
</dbReference>
<dbReference type="PANTHER" id="PTHR20881:SF0">
    <property type="entry name" value="3-METHYL-2-OXOBUTANOATE HYDROXYMETHYLTRANSFERASE"/>
    <property type="match status" value="1"/>
</dbReference>
<dbReference type="Pfam" id="PF02548">
    <property type="entry name" value="Pantoate_transf"/>
    <property type="match status" value="1"/>
</dbReference>
<dbReference type="PIRSF" id="PIRSF000388">
    <property type="entry name" value="Pantoate_hydroxy_MeTrfase"/>
    <property type="match status" value="1"/>
</dbReference>
<dbReference type="SUPFAM" id="SSF51621">
    <property type="entry name" value="Phosphoenolpyruvate/pyruvate domain"/>
    <property type="match status" value="1"/>
</dbReference>
<reference key="1">
    <citation type="journal article" date="2008" name="DNA Res.">
        <title>Determination of the genome sequence of Porphyromonas gingivalis strain ATCC 33277 and genomic comparison with strain W83 revealed extensive genome rearrangements in P. gingivalis.</title>
        <authorList>
            <person name="Naito M."/>
            <person name="Hirakawa H."/>
            <person name="Yamashita A."/>
            <person name="Ohara N."/>
            <person name="Shoji M."/>
            <person name="Yukitake H."/>
            <person name="Nakayama K."/>
            <person name="Toh H."/>
            <person name="Yoshimura F."/>
            <person name="Kuhara S."/>
            <person name="Hattori M."/>
            <person name="Hayashi T."/>
            <person name="Nakayama K."/>
        </authorList>
    </citation>
    <scope>NUCLEOTIDE SEQUENCE [LARGE SCALE GENOMIC DNA]</scope>
    <source>
        <strain>ATCC 33277 / DSM 20709 / CIP 103683 / JCM 12257 / NCTC 11834 / 2561</strain>
    </source>
</reference>
<feature type="chain" id="PRO_1000096991" description="3-methyl-2-oxobutanoate hydroxymethyltransferase">
    <location>
        <begin position="1"/>
        <end position="273"/>
    </location>
</feature>
<feature type="active site" description="Proton acceptor" evidence="1">
    <location>
        <position position="191"/>
    </location>
</feature>
<feature type="binding site" evidence="1">
    <location>
        <begin position="53"/>
        <end position="54"/>
    </location>
    <ligand>
        <name>3-methyl-2-oxobutanoate</name>
        <dbReference type="ChEBI" id="CHEBI:11851"/>
    </ligand>
</feature>
<feature type="binding site" evidence="1">
    <location>
        <position position="53"/>
    </location>
    <ligand>
        <name>Mg(2+)</name>
        <dbReference type="ChEBI" id="CHEBI:18420"/>
    </ligand>
</feature>
<feature type="binding site" evidence="1">
    <location>
        <position position="92"/>
    </location>
    <ligand>
        <name>3-methyl-2-oxobutanoate</name>
        <dbReference type="ChEBI" id="CHEBI:11851"/>
    </ligand>
</feature>
<feature type="binding site" evidence="1">
    <location>
        <position position="92"/>
    </location>
    <ligand>
        <name>Mg(2+)</name>
        <dbReference type="ChEBI" id="CHEBI:18420"/>
    </ligand>
</feature>
<feature type="binding site" evidence="1">
    <location>
        <position position="122"/>
    </location>
    <ligand>
        <name>3-methyl-2-oxobutanoate</name>
        <dbReference type="ChEBI" id="CHEBI:11851"/>
    </ligand>
</feature>
<feature type="binding site" evidence="1">
    <location>
        <position position="124"/>
    </location>
    <ligand>
        <name>Mg(2+)</name>
        <dbReference type="ChEBI" id="CHEBI:18420"/>
    </ligand>
</feature>
<protein>
    <recommendedName>
        <fullName evidence="1">3-methyl-2-oxobutanoate hydroxymethyltransferase</fullName>
        <ecNumber evidence="1">2.1.2.11</ecNumber>
    </recommendedName>
    <alternativeName>
        <fullName evidence="1">Ketopantoate hydroxymethyltransferase</fullName>
        <shortName evidence="1">KPHMT</shortName>
    </alternativeName>
</protein>
<accession>B2RIF8</accession>
<comment type="function">
    <text evidence="1">Catalyzes the reversible reaction in which hydroxymethyl group from 5,10-methylenetetrahydrofolate is transferred onto alpha-ketoisovalerate to form ketopantoate.</text>
</comment>
<comment type="catalytic activity">
    <reaction evidence="1">
        <text>3-methyl-2-oxobutanoate + (6R)-5,10-methylene-5,6,7,8-tetrahydrofolate + H2O = 2-dehydropantoate + (6S)-5,6,7,8-tetrahydrofolate</text>
        <dbReference type="Rhea" id="RHEA:11824"/>
        <dbReference type="ChEBI" id="CHEBI:11561"/>
        <dbReference type="ChEBI" id="CHEBI:11851"/>
        <dbReference type="ChEBI" id="CHEBI:15377"/>
        <dbReference type="ChEBI" id="CHEBI:15636"/>
        <dbReference type="ChEBI" id="CHEBI:57453"/>
        <dbReference type="EC" id="2.1.2.11"/>
    </reaction>
</comment>
<comment type="cofactor">
    <cofactor evidence="1">
        <name>Mg(2+)</name>
        <dbReference type="ChEBI" id="CHEBI:18420"/>
    </cofactor>
    <text evidence="1">Binds 1 Mg(2+) ion per subunit.</text>
</comment>
<comment type="pathway">
    <text evidence="1">Cofactor biosynthesis; (R)-pantothenate biosynthesis; (R)-pantoate from 3-methyl-2-oxobutanoate: step 1/2.</text>
</comment>
<comment type="subunit">
    <text evidence="1">Homodecamer; pentamer of dimers.</text>
</comment>
<comment type="subcellular location">
    <subcellularLocation>
        <location evidence="1">Cytoplasm</location>
    </subcellularLocation>
</comment>
<comment type="similarity">
    <text evidence="1">Belongs to the PanB family.</text>
</comment>
<keyword id="KW-0963">Cytoplasm</keyword>
<keyword id="KW-0460">Magnesium</keyword>
<keyword id="KW-0479">Metal-binding</keyword>
<keyword id="KW-0566">Pantothenate biosynthesis</keyword>
<keyword id="KW-0808">Transferase</keyword>